<evidence type="ECO:0000255" key="1">
    <source>
        <dbReference type="HAMAP-Rule" id="MF_01575"/>
    </source>
</evidence>
<gene>
    <name type="ordered locus">SPy_1647</name>
    <name type="ordered locus">M5005_Spy1353</name>
</gene>
<feature type="chain" id="PRO_0000267187" description="UPF0398 protein SPy_1647/M5005_Spy1353">
    <location>
        <begin position="1"/>
        <end position="171"/>
    </location>
</feature>
<accession>Q99YL3</accession>
<accession>Q48XF4</accession>
<sequence length="171" mass="20438">MTAILITGYRSFEIGIFDHKDPRVSIIKQAIRKDLIGYLENGVDWFIFTGNLGFEQWALEVANELKEEYPLQIATIFLFETHGDRWNEKNKEVLSQFRAVDFVKYYFPNYEQPTQFSQYYQFLLEKTEGAYVFYDTENETNLKYFLKKAKDMPHYQLLLLTFDRLNDMSQS</sequence>
<protein>
    <recommendedName>
        <fullName evidence="1">UPF0398 protein SPy_1647/M5005_Spy1353</fullName>
    </recommendedName>
</protein>
<name>Y1647_STRP1</name>
<dbReference type="EMBL" id="AE004092">
    <property type="protein sequence ID" value="AAK34414.1"/>
    <property type="molecule type" value="Genomic_DNA"/>
</dbReference>
<dbReference type="EMBL" id="CP000017">
    <property type="protein sequence ID" value="AAZ51971.1"/>
    <property type="molecule type" value="Genomic_DNA"/>
</dbReference>
<dbReference type="RefSeq" id="NP_269693.1">
    <property type="nucleotide sequence ID" value="NC_002737.2"/>
</dbReference>
<dbReference type="SMR" id="Q99YL3"/>
<dbReference type="PaxDb" id="1314-HKU360_01404"/>
<dbReference type="KEGG" id="spy:SPy_1647"/>
<dbReference type="KEGG" id="spz:M5005_Spy1353"/>
<dbReference type="PATRIC" id="fig|160490.10.peg.1435"/>
<dbReference type="HOGENOM" id="CLU_105319_0_0_9"/>
<dbReference type="OMA" id="LEWVITG"/>
<dbReference type="Proteomes" id="UP000000750">
    <property type="component" value="Chromosome"/>
</dbReference>
<dbReference type="Gene3D" id="3.40.50.450">
    <property type="match status" value="1"/>
</dbReference>
<dbReference type="HAMAP" id="MF_01575">
    <property type="entry name" value="UPF0398"/>
    <property type="match status" value="1"/>
</dbReference>
<dbReference type="InterPro" id="IPR010697">
    <property type="entry name" value="YspA"/>
</dbReference>
<dbReference type="NCBIfam" id="NF010181">
    <property type="entry name" value="PRK13660.1"/>
    <property type="match status" value="1"/>
</dbReference>
<dbReference type="PANTHER" id="PTHR38440:SF1">
    <property type="entry name" value="UPF0398 PROTEIN SPR0331"/>
    <property type="match status" value="1"/>
</dbReference>
<dbReference type="PANTHER" id="PTHR38440">
    <property type="entry name" value="UPF0398 PROTEIN YPSA"/>
    <property type="match status" value="1"/>
</dbReference>
<dbReference type="Pfam" id="PF06908">
    <property type="entry name" value="YpsA"/>
    <property type="match status" value="1"/>
</dbReference>
<dbReference type="PIRSF" id="PIRSF021290">
    <property type="entry name" value="DUF1273"/>
    <property type="match status" value="1"/>
</dbReference>
<dbReference type="SUPFAM" id="SSF102405">
    <property type="entry name" value="MCP/YpsA-like"/>
    <property type="match status" value="1"/>
</dbReference>
<keyword id="KW-1185">Reference proteome</keyword>
<reference key="1">
    <citation type="journal article" date="2001" name="Proc. Natl. Acad. Sci. U.S.A.">
        <title>Complete genome sequence of an M1 strain of Streptococcus pyogenes.</title>
        <authorList>
            <person name="Ferretti J.J."/>
            <person name="McShan W.M."/>
            <person name="Ajdic D.J."/>
            <person name="Savic D.J."/>
            <person name="Savic G."/>
            <person name="Lyon K."/>
            <person name="Primeaux C."/>
            <person name="Sezate S."/>
            <person name="Suvorov A.N."/>
            <person name="Kenton S."/>
            <person name="Lai H.S."/>
            <person name="Lin S.P."/>
            <person name="Qian Y."/>
            <person name="Jia H.G."/>
            <person name="Najar F.Z."/>
            <person name="Ren Q."/>
            <person name="Zhu H."/>
            <person name="Song L."/>
            <person name="White J."/>
            <person name="Yuan X."/>
            <person name="Clifton S.W."/>
            <person name="Roe B.A."/>
            <person name="McLaughlin R.E."/>
        </authorList>
    </citation>
    <scope>NUCLEOTIDE SEQUENCE [LARGE SCALE GENOMIC DNA]</scope>
    <source>
        <strain>ATCC 700294 / SF370 / Serotype M1</strain>
    </source>
</reference>
<reference key="2">
    <citation type="journal article" date="2005" name="J. Infect. Dis.">
        <title>Evolutionary origin and emergence of a highly successful clone of serotype M1 group A Streptococcus involved multiple horizontal gene transfer events.</title>
        <authorList>
            <person name="Sumby P."/>
            <person name="Porcella S.F."/>
            <person name="Madrigal A.G."/>
            <person name="Barbian K.D."/>
            <person name="Virtaneva K."/>
            <person name="Ricklefs S.M."/>
            <person name="Sturdevant D.E."/>
            <person name="Graham M.R."/>
            <person name="Vuopio-Varkila J."/>
            <person name="Hoe N.P."/>
            <person name="Musser J.M."/>
        </authorList>
    </citation>
    <scope>NUCLEOTIDE SEQUENCE [LARGE SCALE GENOMIC DNA]</scope>
    <source>
        <strain>ATCC BAA-947 / MGAS5005 / Serotype M1</strain>
    </source>
</reference>
<comment type="similarity">
    <text evidence="1">Belongs to the UPF0398 family.</text>
</comment>
<organism>
    <name type="scientific">Streptococcus pyogenes serotype M1</name>
    <dbReference type="NCBI Taxonomy" id="301447"/>
    <lineage>
        <taxon>Bacteria</taxon>
        <taxon>Bacillati</taxon>
        <taxon>Bacillota</taxon>
        <taxon>Bacilli</taxon>
        <taxon>Lactobacillales</taxon>
        <taxon>Streptococcaceae</taxon>
        <taxon>Streptococcus</taxon>
    </lineage>
</organism>
<proteinExistence type="inferred from homology"/>